<dbReference type="EMBL" id="AAFI02000019">
    <property type="protein sequence ID" value="EAL69063.1"/>
    <property type="molecule type" value="Genomic_DNA"/>
</dbReference>
<dbReference type="RefSeq" id="XP_642987.1">
    <property type="nucleotide sequence ID" value="XM_637895.1"/>
</dbReference>
<dbReference type="SMR" id="Q550E5"/>
<dbReference type="STRING" id="44689.Q550E5"/>
<dbReference type="PaxDb" id="44689-DDB0232134"/>
<dbReference type="EnsemblProtists" id="EAL69063">
    <property type="protein sequence ID" value="EAL69063"/>
    <property type="gene ID" value="DDB_G0277123"/>
</dbReference>
<dbReference type="GeneID" id="8620860"/>
<dbReference type="KEGG" id="ddi:DDB_G0277123"/>
<dbReference type="dictyBase" id="DDB_G0277123">
    <property type="gene designation" value="hspG10"/>
</dbReference>
<dbReference type="VEuPathDB" id="AmoebaDB:DDB_G0277123"/>
<dbReference type="HOGENOM" id="CLU_173640_0_0_1"/>
<dbReference type="InParanoid" id="Q550E5"/>
<dbReference type="PhylomeDB" id="Q550E5"/>
<dbReference type="PRO" id="PR:Q550E5"/>
<dbReference type="Proteomes" id="UP000002195">
    <property type="component" value="Chromosome 2"/>
</dbReference>
<dbReference type="CDD" id="cd06464">
    <property type="entry name" value="ACD_sHsps-like"/>
    <property type="match status" value="1"/>
</dbReference>
<dbReference type="Gene3D" id="2.60.40.790">
    <property type="match status" value="1"/>
</dbReference>
<dbReference type="InterPro" id="IPR002068">
    <property type="entry name" value="A-crystallin/Hsp20_dom"/>
</dbReference>
<dbReference type="InterPro" id="IPR008978">
    <property type="entry name" value="HSP20-like_chaperone"/>
</dbReference>
<dbReference type="InterPro" id="IPR051779">
    <property type="entry name" value="HspG1-11-like"/>
</dbReference>
<dbReference type="PANTHER" id="PTHR46827">
    <property type="entry name" value="HEAT SHOCK PROTEIN DDB_G0288861-RELATED"/>
    <property type="match status" value="1"/>
</dbReference>
<dbReference type="PANTHER" id="PTHR46827:SF1">
    <property type="entry name" value="HEAT SHOCK PROTEIN DDB_G0288861-RELATED"/>
    <property type="match status" value="1"/>
</dbReference>
<dbReference type="SUPFAM" id="SSF49764">
    <property type="entry name" value="HSP20-like chaperones"/>
    <property type="match status" value="1"/>
</dbReference>
<dbReference type="PROSITE" id="PS01031">
    <property type="entry name" value="SHSP"/>
    <property type="match status" value="1"/>
</dbReference>
<reference key="1">
    <citation type="journal article" date="2002" name="Nature">
        <title>Sequence and analysis of chromosome 2 of Dictyostelium discoideum.</title>
        <authorList>
            <person name="Gloeckner G."/>
            <person name="Eichinger L."/>
            <person name="Szafranski K."/>
            <person name="Pachebat J.A."/>
            <person name="Bankier A.T."/>
            <person name="Dear P.H."/>
            <person name="Lehmann R."/>
            <person name="Baumgart C."/>
            <person name="Parra G."/>
            <person name="Abril J.F."/>
            <person name="Guigo R."/>
            <person name="Kumpf K."/>
            <person name="Tunggal B."/>
            <person name="Cox E.C."/>
            <person name="Quail M.A."/>
            <person name="Platzer M."/>
            <person name="Rosenthal A."/>
            <person name="Noegel A.A."/>
        </authorList>
    </citation>
    <scope>NUCLEOTIDE SEQUENCE [LARGE SCALE GENOMIC DNA]</scope>
    <source>
        <strain>AX4</strain>
    </source>
</reference>
<reference key="2">
    <citation type="journal article" date="2005" name="Nature">
        <title>The genome of the social amoeba Dictyostelium discoideum.</title>
        <authorList>
            <person name="Eichinger L."/>
            <person name="Pachebat J.A."/>
            <person name="Gloeckner G."/>
            <person name="Rajandream M.A."/>
            <person name="Sucgang R."/>
            <person name="Berriman M."/>
            <person name="Song J."/>
            <person name="Olsen R."/>
            <person name="Szafranski K."/>
            <person name="Xu Q."/>
            <person name="Tunggal B."/>
            <person name="Kummerfeld S."/>
            <person name="Madera M."/>
            <person name="Konfortov B.A."/>
            <person name="Rivero F."/>
            <person name="Bankier A.T."/>
            <person name="Lehmann R."/>
            <person name="Hamlin N."/>
            <person name="Davies R."/>
            <person name="Gaudet P."/>
            <person name="Fey P."/>
            <person name="Pilcher K."/>
            <person name="Chen G."/>
            <person name="Saunders D."/>
            <person name="Sodergren E.J."/>
            <person name="Davis P."/>
            <person name="Kerhornou A."/>
            <person name="Nie X."/>
            <person name="Hall N."/>
            <person name="Anjard C."/>
            <person name="Hemphill L."/>
            <person name="Bason N."/>
            <person name="Farbrother P."/>
            <person name="Desany B."/>
            <person name="Just E."/>
            <person name="Morio T."/>
            <person name="Rost R."/>
            <person name="Churcher C.M."/>
            <person name="Cooper J."/>
            <person name="Haydock S."/>
            <person name="van Driessche N."/>
            <person name="Cronin A."/>
            <person name="Goodhead I."/>
            <person name="Muzny D.M."/>
            <person name="Mourier T."/>
            <person name="Pain A."/>
            <person name="Lu M."/>
            <person name="Harper D."/>
            <person name="Lindsay R."/>
            <person name="Hauser H."/>
            <person name="James K.D."/>
            <person name="Quiles M."/>
            <person name="Madan Babu M."/>
            <person name="Saito T."/>
            <person name="Buchrieser C."/>
            <person name="Wardroper A."/>
            <person name="Felder M."/>
            <person name="Thangavelu M."/>
            <person name="Johnson D."/>
            <person name="Knights A."/>
            <person name="Loulseged H."/>
            <person name="Mungall K.L."/>
            <person name="Oliver K."/>
            <person name="Price C."/>
            <person name="Quail M.A."/>
            <person name="Urushihara H."/>
            <person name="Hernandez J."/>
            <person name="Rabbinowitsch E."/>
            <person name="Steffen D."/>
            <person name="Sanders M."/>
            <person name="Ma J."/>
            <person name="Kohara Y."/>
            <person name="Sharp S."/>
            <person name="Simmonds M.N."/>
            <person name="Spiegler S."/>
            <person name="Tivey A."/>
            <person name="Sugano S."/>
            <person name="White B."/>
            <person name="Walker D."/>
            <person name="Woodward J.R."/>
            <person name="Winckler T."/>
            <person name="Tanaka Y."/>
            <person name="Shaulsky G."/>
            <person name="Schleicher M."/>
            <person name="Weinstock G.M."/>
            <person name="Rosenthal A."/>
            <person name="Cox E.C."/>
            <person name="Chisholm R.L."/>
            <person name="Gibbs R.A."/>
            <person name="Loomis W.F."/>
            <person name="Platzer M."/>
            <person name="Kay R.R."/>
            <person name="Williams J.G."/>
            <person name="Dear P.H."/>
            <person name="Noegel A.A."/>
            <person name="Barrell B.G."/>
            <person name="Kuspa A."/>
        </authorList>
    </citation>
    <scope>NUCLEOTIDE SEQUENCE [LARGE SCALE GENOMIC DNA]</scope>
    <source>
        <strain>AX4</strain>
    </source>
</reference>
<gene>
    <name type="primary">hspG10</name>
    <name type="ORF">DDB_G0277123</name>
</gene>
<name>HSPGA_DICDI</name>
<accession>Q550E5</accession>
<feature type="chain" id="PRO_0000363902" description="Small heat shock protein hspG10">
    <location>
        <begin position="1"/>
        <end position="74"/>
    </location>
</feature>
<feature type="domain" description="sHSP" evidence="1">
    <location>
        <begin position="31"/>
        <end position="74"/>
    </location>
</feature>
<evidence type="ECO:0000255" key="1">
    <source>
        <dbReference type="PROSITE-ProRule" id="PRU00285"/>
    </source>
</evidence>
<evidence type="ECO:0000305" key="2"/>
<sequence length="74" mass="8380">MATIFDILNTHNNNNNFENCKRQCSTNKSNKTIIDILPSMDVTMTNDKLIIETELAGISKDHIEIDIKDSILTI</sequence>
<keyword id="KW-1185">Reference proteome</keyword>
<keyword id="KW-0346">Stress response</keyword>
<comment type="similarity">
    <text evidence="1 2">Belongs to the small heat shock protein (HSP20) family.</text>
</comment>
<organism>
    <name type="scientific">Dictyostelium discoideum</name>
    <name type="common">Social amoeba</name>
    <dbReference type="NCBI Taxonomy" id="44689"/>
    <lineage>
        <taxon>Eukaryota</taxon>
        <taxon>Amoebozoa</taxon>
        <taxon>Evosea</taxon>
        <taxon>Eumycetozoa</taxon>
        <taxon>Dictyostelia</taxon>
        <taxon>Dictyosteliales</taxon>
        <taxon>Dictyosteliaceae</taxon>
        <taxon>Dictyostelium</taxon>
    </lineage>
</organism>
<protein>
    <recommendedName>
        <fullName>Small heat shock protein hspG10</fullName>
    </recommendedName>
</protein>
<proteinExistence type="inferred from homology"/>